<name>GPR55_MOUSE</name>
<protein>
    <recommendedName>
        <fullName>G-protein coupled receptor 55</fullName>
    </recommendedName>
</protein>
<gene>
    <name type="primary">Gpr55</name>
    <name type="synonym">Gm218</name>
</gene>
<accession>Q3UJF0</accession>
<keyword id="KW-1003">Cell membrane</keyword>
<keyword id="KW-0297">G-protein coupled receptor</keyword>
<keyword id="KW-0325">Glycoprotein</keyword>
<keyword id="KW-0472">Membrane</keyword>
<keyword id="KW-0675">Receptor</keyword>
<keyword id="KW-1185">Reference proteome</keyword>
<keyword id="KW-0807">Transducer</keyword>
<keyword id="KW-0812">Transmembrane</keyword>
<keyword id="KW-1133">Transmembrane helix</keyword>
<proteinExistence type="evidence at transcript level"/>
<evidence type="ECO:0000250" key="1"/>
<evidence type="ECO:0000250" key="2">
    <source>
        <dbReference type="UniProtKB" id="Q9Y2T6"/>
    </source>
</evidence>
<evidence type="ECO:0000255" key="3"/>
<evidence type="ECO:0000255" key="4">
    <source>
        <dbReference type="PROSITE-ProRule" id="PRU00521"/>
    </source>
</evidence>
<evidence type="ECO:0000269" key="5">
    <source>
    </source>
</evidence>
<evidence type="ECO:0000269" key="6">
    <source>
    </source>
</evidence>
<evidence type="ECO:0000269" key="7">
    <source>
    </source>
</evidence>
<evidence type="ECO:0000305" key="8"/>
<reference key="1">
    <citation type="journal article" date="2005" name="Science">
        <title>The transcriptional landscape of the mammalian genome.</title>
        <authorList>
            <person name="Carninci P."/>
            <person name="Kasukawa T."/>
            <person name="Katayama S."/>
            <person name="Gough J."/>
            <person name="Frith M.C."/>
            <person name="Maeda N."/>
            <person name="Oyama R."/>
            <person name="Ravasi T."/>
            <person name="Lenhard B."/>
            <person name="Wells C."/>
            <person name="Kodzius R."/>
            <person name="Shimokawa K."/>
            <person name="Bajic V.B."/>
            <person name="Brenner S.E."/>
            <person name="Batalov S."/>
            <person name="Forrest A.R."/>
            <person name="Zavolan M."/>
            <person name="Davis M.J."/>
            <person name="Wilming L.G."/>
            <person name="Aidinis V."/>
            <person name="Allen J.E."/>
            <person name="Ambesi-Impiombato A."/>
            <person name="Apweiler R."/>
            <person name="Aturaliya R.N."/>
            <person name="Bailey T.L."/>
            <person name="Bansal M."/>
            <person name="Baxter L."/>
            <person name="Beisel K.W."/>
            <person name="Bersano T."/>
            <person name="Bono H."/>
            <person name="Chalk A.M."/>
            <person name="Chiu K.P."/>
            <person name="Choudhary V."/>
            <person name="Christoffels A."/>
            <person name="Clutterbuck D.R."/>
            <person name="Crowe M.L."/>
            <person name="Dalla E."/>
            <person name="Dalrymple B.P."/>
            <person name="de Bono B."/>
            <person name="Della Gatta G."/>
            <person name="di Bernardo D."/>
            <person name="Down T."/>
            <person name="Engstrom P."/>
            <person name="Fagiolini M."/>
            <person name="Faulkner G."/>
            <person name="Fletcher C.F."/>
            <person name="Fukushima T."/>
            <person name="Furuno M."/>
            <person name="Futaki S."/>
            <person name="Gariboldi M."/>
            <person name="Georgii-Hemming P."/>
            <person name="Gingeras T.R."/>
            <person name="Gojobori T."/>
            <person name="Green R.E."/>
            <person name="Gustincich S."/>
            <person name="Harbers M."/>
            <person name="Hayashi Y."/>
            <person name="Hensch T.K."/>
            <person name="Hirokawa N."/>
            <person name="Hill D."/>
            <person name="Huminiecki L."/>
            <person name="Iacono M."/>
            <person name="Ikeo K."/>
            <person name="Iwama A."/>
            <person name="Ishikawa T."/>
            <person name="Jakt M."/>
            <person name="Kanapin A."/>
            <person name="Katoh M."/>
            <person name="Kawasawa Y."/>
            <person name="Kelso J."/>
            <person name="Kitamura H."/>
            <person name="Kitano H."/>
            <person name="Kollias G."/>
            <person name="Krishnan S.P."/>
            <person name="Kruger A."/>
            <person name="Kummerfeld S.K."/>
            <person name="Kurochkin I.V."/>
            <person name="Lareau L.F."/>
            <person name="Lazarevic D."/>
            <person name="Lipovich L."/>
            <person name="Liu J."/>
            <person name="Liuni S."/>
            <person name="McWilliam S."/>
            <person name="Madan Babu M."/>
            <person name="Madera M."/>
            <person name="Marchionni L."/>
            <person name="Matsuda H."/>
            <person name="Matsuzawa S."/>
            <person name="Miki H."/>
            <person name="Mignone F."/>
            <person name="Miyake S."/>
            <person name="Morris K."/>
            <person name="Mottagui-Tabar S."/>
            <person name="Mulder N."/>
            <person name="Nakano N."/>
            <person name="Nakauchi H."/>
            <person name="Ng P."/>
            <person name="Nilsson R."/>
            <person name="Nishiguchi S."/>
            <person name="Nishikawa S."/>
            <person name="Nori F."/>
            <person name="Ohara O."/>
            <person name="Okazaki Y."/>
            <person name="Orlando V."/>
            <person name="Pang K.C."/>
            <person name="Pavan W.J."/>
            <person name="Pavesi G."/>
            <person name="Pesole G."/>
            <person name="Petrovsky N."/>
            <person name="Piazza S."/>
            <person name="Reed J."/>
            <person name="Reid J.F."/>
            <person name="Ring B.Z."/>
            <person name="Ringwald M."/>
            <person name="Rost B."/>
            <person name="Ruan Y."/>
            <person name="Salzberg S.L."/>
            <person name="Sandelin A."/>
            <person name="Schneider C."/>
            <person name="Schoenbach C."/>
            <person name="Sekiguchi K."/>
            <person name="Semple C.A."/>
            <person name="Seno S."/>
            <person name="Sessa L."/>
            <person name="Sheng Y."/>
            <person name="Shibata Y."/>
            <person name="Shimada H."/>
            <person name="Shimada K."/>
            <person name="Silva D."/>
            <person name="Sinclair B."/>
            <person name="Sperling S."/>
            <person name="Stupka E."/>
            <person name="Sugiura K."/>
            <person name="Sultana R."/>
            <person name="Takenaka Y."/>
            <person name="Taki K."/>
            <person name="Tammoja K."/>
            <person name="Tan S.L."/>
            <person name="Tang S."/>
            <person name="Taylor M.S."/>
            <person name="Tegner J."/>
            <person name="Teichmann S.A."/>
            <person name="Ueda H.R."/>
            <person name="van Nimwegen E."/>
            <person name="Verardo R."/>
            <person name="Wei C.L."/>
            <person name="Yagi K."/>
            <person name="Yamanishi H."/>
            <person name="Zabarovsky E."/>
            <person name="Zhu S."/>
            <person name="Zimmer A."/>
            <person name="Hide W."/>
            <person name="Bult C."/>
            <person name="Grimmond S.M."/>
            <person name="Teasdale R.D."/>
            <person name="Liu E.T."/>
            <person name="Brusic V."/>
            <person name="Quackenbush J."/>
            <person name="Wahlestedt C."/>
            <person name="Mattick J.S."/>
            <person name="Hume D.A."/>
            <person name="Kai C."/>
            <person name="Sasaki D."/>
            <person name="Tomaru Y."/>
            <person name="Fukuda S."/>
            <person name="Kanamori-Katayama M."/>
            <person name="Suzuki M."/>
            <person name="Aoki J."/>
            <person name="Arakawa T."/>
            <person name="Iida J."/>
            <person name="Imamura K."/>
            <person name="Itoh M."/>
            <person name="Kato T."/>
            <person name="Kawaji H."/>
            <person name="Kawagashira N."/>
            <person name="Kawashima T."/>
            <person name="Kojima M."/>
            <person name="Kondo S."/>
            <person name="Konno H."/>
            <person name="Nakano K."/>
            <person name="Ninomiya N."/>
            <person name="Nishio T."/>
            <person name="Okada M."/>
            <person name="Plessy C."/>
            <person name="Shibata K."/>
            <person name="Shiraki T."/>
            <person name="Suzuki S."/>
            <person name="Tagami M."/>
            <person name="Waki K."/>
            <person name="Watahiki A."/>
            <person name="Okamura-Oho Y."/>
            <person name="Suzuki H."/>
            <person name="Kawai J."/>
            <person name="Hayashizaki Y."/>
        </authorList>
    </citation>
    <scope>NUCLEOTIDE SEQUENCE [LARGE SCALE MRNA]</scope>
    <source>
        <strain>C57BL/6J</strain>
        <tissue>Amnion</tissue>
    </source>
</reference>
<reference key="2">
    <citation type="journal article" date="2009" name="PLoS Biol.">
        <title>Lineage-specific biology revealed by a finished genome assembly of the mouse.</title>
        <authorList>
            <person name="Church D.M."/>
            <person name="Goodstadt L."/>
            <person name="Hillier L.W."/>
            <person name="Zody M.C."/>
            <person name="Goldstein S."/>
            <person name="She X."/>
            <person name="Bult C.J."/>
            <person name="Agarwala R."/>
            <person name="Cherry J.L."/>
            <person name="DiCuccio M."/>
            <person name="Hlavina W."/>
            <person name="Kapustin Y."/>
            <person name="Meric P."/>
            <person name="Maglott D."/>
            <person name="Birtle Z."/>
            <person name="Marques A.C."/>
            <person name="Graves T."/>
            <person name="Zhou S."/>
            <person name="Teague B."/>
            <person name="Potamousis K."/>
            <person name="Churas C."/>
            <person name="Place M."/>
            <person name="Herschleb J."/>
            <person name="Runnheim R."/>
            <person name="Forrest D."/>
            <person name="Amos-Landgraf J."/>
            <person name="Schwartz D.C."/>
            <person name="Cheng Z."/>
            <person name="Lindblad-Toh K."/>
            <person name="Eichler E.E."/>
            <person name="Ponting C.P."/>
        </authorList>
    </citation>
    <scope>NUCLEOTIDE SEQUENCE [LARGE SCALE GENOMIC DNA]</scope>
    <source>
        <strain>C57BL/6J</strain>
    </source>
</reference>
<reference key="3">
    <citation type="journal article" date="2008" name="Pain">
        <title>The putative cannabinoid receptor GPR55 plays a role in mechanical hyperalgesia associated with inflammatory and neuropathic pain.</title>
        <authorList>
            <person name="Staton P.C."/>
            <person name="Hatcher J.P."/>
            <person name="Walker D.J."/>
            <person name="Morrison A.D."/>
            <person name="Shapland E.M."/>
            <person name="Hughes J.P."/>
            <person name="Chong E."/>
            <person name="Mander P.K."/>
            <person name="Green P.J."/>
            <person name="Billinton A."/>
            <person name="Fulleylove M."/>
            <person name="Lancaster H.C."/>
            <person name="Smith J.C."/>
            <person name="Bailey L.T."/>
            <person name="Wise A."/>
            <person name="Brown A.J."/>
            <person name="Richardson J.C."/>
            <person name="Chessell I.P."/>
        </authorList>
    </citation>
    <scope>DISRUPTION PHENOTYPE</scope>
    <scope>FUNCTION</scope>
</reference>
<reference key="4">
    <citation type="journal article" date="2022" name="Nat. Cardiovasc. Res.">
        <title>GPR55 in B cells limits atherosclerosis development and regulates plasma cell maturation.</title>
        <authorList>
            <person name="Guillamat-Prats R."/>
            <person name="Hering D."/>
            <person name="Derle A."/>
            <person name="Rami M."/>
            <person name="Haerdtner C."/>
            <person name="Santovito D."/>
            <person name="Rinne P."/>
            <person name="Bindila L."/>
            <person name="Hristov M."/>
            <person name="Pagano S."/>
            <person name="Vuilleumier N."/>
            <person name="Schmid S."/>
            <person name="Janjic A."/>
            <person name="Enard W."/>
            <person name="Weber C."/>
            <person name="Maegdefessel L."/>
            <person name="Faussner A."/>
            <person name="Hilgendorf I."/>
            <person name="Steffens S."/>
        </authorList>
    </citation>
    <scope>FUNCTION</scope>
    <scope>DISRUPTION PHENOTYPE</scope>
    <scope>TISSUE SPECIFICITY</scope>
</reference>
<reference key="5">
    <citation type="journal article" date="2023" name="Brain Behav. Immun.">
        <title>GPR55 contributes to neutrophil recruitment and mechanical pain induction after spinal cord compression in mice.</title>
        <authorList>
            <person name="Ono T."/>
            <person name="Yamashita T."/>
            <person name="Kano R."/>
            <person name="Inoue M."/>
            <person name="Okada S."/>
            <person name="Kano K."/>
            <person name="Koizumi S."/>
            <person name="Iwabuchi K."/>
            <person name="Hirabayashi Y."/>
            <person name="Matsuo I."/>
            <person name="Nakashima Y."/>
            <person name="Kamiguchi H."/>
            <person name="Kohro Y."/>
            <person name="Tsuda M."/>
        </authorList>
    </citation>
    <scope>DISRUPTION PHENOTYPE</scope>
</reference>
<organism>
    <name type="scientific">Mus musculus</name>
    <name type="common">Mouse</name>
    <dbReference type="NCBI Taxonomy" id="10090"/>
    <lineage>
        <taxon>Eukaryota</taxon>
        <taxon>Metazoa</taxon>
        <taxon>Chordata</taxon>
        <taxon>Craniata</taxon>
        <taxon>Vertebrata</taxon>
        <taxon>Euteleostomi</taxon>
        <taxon>Mammalia</taxon>
        <taxon>Eutheria</taxon>
        <taxon>Euarchontoglires</taxon>
        <taxon>Glires</taxon>
        <taxon>Rodentia</taxon>
        <taxon>Myomorpha</taxon>
        <taxon>Muroidea</taxon>
        <taxon>Muridae</taxon>
        <taxon>Murinae</taxon>
        <taxon>Mus</taxon>
        <taxon>Mus</taxon>
    </lineage>
</organism>
<comment type="function">
    <text evidence="2 5">G-protein coupled receptor that binds to several ligands including 2-arachidonoyl lysophosphatidylinositol or lysophosphatidylglucoside with high affinity, leading to rapid and transient activation of numerous intracellular signaling pathways. Induces the Ca(2+) release from intracellular stores via ERK, the heterotrimeric G protein GNA13 and RHOA leading to morphological changes including cell rounding and stress fiber formation. In macrophages, acts downstream of lysophosphatidylglucoside to inhibit the translocation of the phospholipid-transporting ABCA1 to plasma membrane and subsequent cholesterol efflux leading to lipid accumulation and foam cell formation. May be involved in hyperalgesia associated with inflammatory and neuropathic pain (PubMed:18502582).</text>
</comment>
<comment type="subcellular location">
    <subcellularLocation>
        <location evidence="1">Cell membrane</location>
        <topology evidence="1">Multi-pass membrane protein</topology>
    </subcellularLocation>
</comment>
<comment type="tissue specificity">
    <text evidence="6">Highly expressed in splenic plasma cells.</text>
</comment>
<comment type="disruption phenotype">
    <text evidence="5 6 7">Mutant mice are resistant to mechanical hyperalgesia and have increased levels of anti-inflammatory cytokines (PubMed:18502582). GPR55 deficiency disturbs metabolism and drives inflammation while B-cell-specific deficiency promotes atherosclerosis with reduced plasma cholesterol levels (PubMed:36523570). Mice also display suppression of the onset of mechanical pain hypersensitivity and spinal recruitment of neutrophils and other inflammatory cells after spinal cord compression (PubMed:36898418).</text>
</comment>
<comment type="miscellaneous">
    <text>The classification of this protein as a cannabinoid receptor remains a contentious issue due to conflicting pharmacological results.</text>
</comment>
<comment type="similarity">
    <text evidence="4">Belongs to the G-protein coupled receptor 1 family.</text>
</comment>
<dbReference type="EMBL" id="AK146484">
    <property type="protein sequence ID" value="BAE27205.1"/>
    <property type="molecule type" value="mRNA"/>
</dbReference>
<dbReference type="EMBL" id="AC102506">
    <property type="status" value="NOT_ANNOTATED_CDS"/>
    <property type="molecule type" value="Genomic_DNA"/>
</dbReference>
<dbReference type="EMBL" id="AC107707">
    <property type="status" value="NOT_ANNOTATED_CDS"/>
    <property type="molecule type" value="Genomic_DNA"/>
</dbReference>
<dbReference type="CCDS" id="CCDS15115.1"/>
<dbReference type="RefSeq" id="NP_001028462.2">
    <property type="nucleotide sequence ID" value="NM_001033290.3"/>
</dbReference>
<dbReference type="RefSeq" id="XP_006529526.1">
    <property type="nucleotide sequence ID" value="XM_006529463.3"/>
</dbReference>
<dbReference type="RefSeq" id="XP_017175826.1">
    <property type="nucleotide sequence ID" value="XM_017320337.3"/>
</dbReference>
<dbReference type="RefSeq" id="XP_030109576.1">
    <property type="nucleotide sequence ID" value="XM_030253716.2"/>
</dbReference>
<dbReference type="RefSeq" id="XP_030109578.1">
    <property type="nucleotide sequence ID" value="XM_030253718.2"/>
</dbReference>
<dbReference type="RefSeq" id="XP_036020385.1">
    <property type="nucleotide sequence ID" value="XM_036164492.1"/>
</dbReference>
<dbReference type="SMR" id="Q3UJF0"/>
<dbReference type="FunCoup" id="Q3UJF0">
    <property type="interactions" value="1007"/>
</dbReference>
<dbReference type="STRING" id="10090.ENSMUSP00000084196"/>
<dbReference type="GlyCosmos" id="Q3UJF0">
    <property type="glycosylation" value="2 sites, No reported glycans"/>
</dbReference>
<dbReference type="GlyGen" id="Q3UJF0">
    <property type="glycosylation" value="2 sites"/>
</dbReference>
<dbReference type="iPTMnet" id="Q3UJF0"/>
<dbReference type="PhosphoSitePlus" id="Q3UJF0"/>
<dbReference type="PaxDb" id="10090-ENSMUSP00000084196"/>
<dbReference type="ProteomicsDB" id="271275"/>
<dbReference type="Antibodypedia" id="20197">
    <property type="antibodies" value="167 antibodies from 26 providers"/>
</dbReference>
<dbReference type="Ensembl" id="ENSMUST00000086975.7">
    <property type="protein sequence ID" value="ENSMUSP00000084196.5"/>
    <property type="gene ID" value="ENSMUSG00000049608.10"/>
</dbReference>
<dbReference type="GeneID" id="227326"/>
<dbReference type="KEGG" id="mmu:227326"/>
<dbReference type="UCSC" id="uc007buq.1">
    <property type="organism name" value="mouse"/>
</dbReference>
<dbReference type="AGR" id="MGI:2685064"/>
<dbReference type="CTD" id="9290"/>
<dbReference type="MGI" id="MGI:2685064">
    <property type="gene designation" value="Gpr55"/>
</dbReference>
<dbReference type="VEuPathDB" id="HostDB:ENSMUSG00000049608"/>
<dbReference type="eggNOG" id="ENOG502QWNM">
    <property type="taxonomic scope" value="Eukaryota"/>
</dbReference>
<dbReference type="GeneTree" id="ENSGT01040000240444"/>
<dbReference type="HOGENOM" id="CLU_009579_8_2_1"/>
<dbReference type="InParanoid" id="Q3UJF0"/>
<dbReference type="OMA" id="TCFHNMS"/>
<dbReference type="OrthoDB" id="9447539at2759"/>
<dbReference type="PhylomeDB" id="Q3UJF0"/>
<dbReference type="TreeFam" id="TF335700"/>
<dbReference type="Reactome" id="R-MMU-373076">
    <property type="pathway name" value="Class A/1 (Rhodopsin-like receptors)"/>
</dbReference>
<dbReference type="Reactome" id="R-MMU-418594">
    <property type="pathway name" value="G alpha (i) signalling events"/>
</dbReference>
<dbReference type="BioGRID-ORCS" id="227326">
    <property type="hits" value="1 hit in 77 CRISPR screens"/>
</dbReference>
<dbReference type="PRO" id="PR:Q3UJF0"/>
<dbReference type="Proteomes" id="UP000000589">
    <property type="component" value="Chromosome 1"/>
</dbReference>
<dbReference type="RNAct" id="Q3UJF0">
    <property type="molecule type" value="protein"/>
</dbReference>
<dbReference type="Bgee" id="ENSMUSG00000049608">
    <property type="expression patterns" value="Expressed in jejunum and 26 other cell types or tissues"/>
</dbReference>
<dbReference type="GO" id="GO:0005886">
    <property type="term" value="C:plasma membrane"/>
    <property type="evidence" value="ECO:0000250"/>
    <property type="project" value="UniProtKB"/>
</dbReference>
<dbReference type="GO" id="GO:0004949">
    <property type="term" value="F:cannabinoid receptor activity"/>
    <property type="evidence" value="ECO:0007669"/>
    <property type="project" value="Ensembl"/>
</dbReference>
<dbReference type="GO" id="GO:0045453">
    <property type="term" value="P:bone resorption"/>
    <property type="evidence" value="ECO:0007669"/>
    <property type="project" value="Ensembl"/>
</dbReference>
<dbReference type="GO" id="GO:0045671">
    <property type="term" value="P:negative regulation of osteoclast differentiation"/>
    <property type="evidence" value="ECO:0007669"/>
    <property type="project" value="Ensembl"/>
</dbReference>
<dbReference type="GO" id="GO:0007200">
    <property type="term" value="P:phospholipase C-activating G protein-coupled receptor signaling pathway"/>
    <property type="evidence" value="ECO:0000250"/>
    <property type="project" value="UniProtKB"/>
</dbReference>
<dbReference type="GO" id="GO:0070374">
    <property type="term" value="P:positive regulation of ERK1 and ERK2 cascade"/>
    <property type="evidence" value="ECO:0000250"/>
    <property type="project" value="UniProtKB"/>
</dbReference>
<dbReference type="GO" id="GO:0035025">
    <property type="term" value="P:positive regulation of Rho protein signal transduction"/>
    <property type="evidence" value="ECO:0000250"/>
    <property type="project" value="UniProtKB"/>
</dbReference>
<dbReference type="FunFam" id="1.20.1070.10:FF:000142">
    <property type="entry name" value="G protein-coupled receptor 55"/>
    <property type="match status" value="1"/>
</dbReference>
<dbReference type="Gene3D" id="1.20.1070.10">
    <property type="entry name" value="Rhodopsin 7-helix transmembrane proteins"/>
    <property type="match status" value="1"/>
</dbReference>
<dbReference type="InterPro" id="IPR000276">
    <property type="entry name" value="GPCR_Rhodpsn"/>
</dbReference>
<dbReference type="InterPro" id="IPR017452">
    <property type="entry name" value="GPCR_Rhodpsn_7TM"/>
</dbReference>
<dbReference type="PANTHER" id="PTHR24232">
    <property type="entry name" value="G-PROTEIN COUPLED RECEPTOR"/>
    <property type="match status" value="1"/>
</dbReference>
<dbReference type="PANTHER" id="PTHR24232:SF56">
    <property type="entry name" value="G-PROTEIN COUPLED RECEPTOR 55"/>
    <property type="match status" value="1"/>
</dbReference>
<dbReference type="Pfam" id="PF00001">
    <property type="entry name" value="7tm_1"/>
    <property type="match status" value="1"/>
</dbReference>
<dbReference type="PRINTS" id="PR00237">
    <property type="entry name" value="GPCRRHODOPSN"/>
</dbReference>
<dbReference type="SUPFAM" id="SSF81321">
    <property type="entry name" value="Family A G protein-coupled receptor-like"/>
    <property type="match status" value="1"/>
</dbReference>
<dbReference type="PROSITE" id="PS00237">
    <property type="entry name" value="G_PROTEIN_RECEP_F1_1"/>
    <property type="match status" value="1"/>
</dbReference>
<dbReference type="PROSITE" id="PS50262">
    <property type="entry name" value="G_PROTEIN_RECEP_F1_2"/>
    <property type="match status" value="1"/>
</dbReference>
<feature type="chain" id="PRO_0000233978" description="G-protein coupled receptor 55">
    <location>
        <begin position="1"/>
        <end position="327"/>
    </location>
</feature>
<feature type="topological domain" description="Extracellular" evidence="3">
    <location>
        <begin position="1"/>
        <end position="20"/>
    </location>
</feature>
<feature type="transmembrane region" description="Helical; Name=1" evidence="3">
    <location>
        <begin position="21"/>
        <end position="41"/>
    </location>
</feature>
<feature type="topological domain" description="Cytoplasmic" evidence="3">
    <location>
        <begin position="42"/>
        <end position="57"/>
    </location>
</feature>
<feature type="transmembrane region" description="Helical; Name=2" evidence="3">
    <location>
        <begin position="58"/>
        <end position="78"/>
    </location>
</feature>
<feature type="topological domain" description="Extracellular" evidence="3">
    <location>
        <begin position="79"/>
        <end position="93"/>
    </location>
</feature>
<feature type="transmembrane region" description="Helical; Name=3" evidence="3">
    <location>
        <begin position="94"/>
        <end position="114"/>
    </location>
</feature>
<feature type="topological domain" description="Cytoplasmic" evidence="3">
    <location>
        <begin position="115"/>
        <end position="136"/>
    </location>
</feature>
<feature type="transmembrane region" description="Helical; Name=4" evidence="3">
    <location>
        <begin position="137"/>
        <end position="157"/>
    </location>
</feature>
<feature type="topological domain" description="Extracellular" evidence="3">
    <location>
        <begin position="158"/>
        <end position="179"/>
    </location>
</feature>
<feature type="transmembrane region" description="Helical; Name=5" evidence="3">
    <location>
        <begin position="180"/>
        <end position="200"/>
    </location>
</feature>
<feature type="topological domain" description="Cytoplasmic" evidence="3">
    <location>
        <begin position="201"/>
        <end position="239"/>
    </location>
</feature>
<feature type="transmembrane region" description="Helical; Name=6" evidence="3">
    <location>
        <begin position="240"/>
        <end position="260"/>
    </location>
</feature>
<feature type="topological domain" description="Extracellular" evidence="3">
    <location>
        <begin position="261"/>
        <end position="279"/>
    </location>
</feature>
<feature type="transmembrane region" description="Helical; Name=7" evidence="3">
    <location>
        <begin position="280"/>
        <end position="300"/>
    </location>
</feature>
<feature type="topological domain" description="Cytoplasmic" evidence="3">
    <location>
        <begin position="301"/>
        <end position="327"/>
    </location>
</feature>
<feature type="glycosylation site" description="N-linked (GlcNAc...) asparagine" evidence="3">
    <location>
        <position position="8"/>
    </location>
</feature>
<feature type="glycosylation site" description="N-linked (GlcNAc...) asparagine" evidence="3">
    <location>
        <position position="170"/>
    </location>
</feature>
<feature type="sequence conflict" description="In Ref. 1; BAE27205." evidence="8" ref="1">
    <original>WVQKRA</original>
    <variation>LGTKREP</variation>
    <location>
        <begin position="226"/>
        <end position="231"/>
    </location>
</feature>
<sequence>MSQPERDNCSFDSVDKLTRTLQLAVHIPTFLLGLVLNLLAIRGFSAFLKKRKLDYIATSIYMINLAVFDLLLVLSLPFKMVLPQVESPLPSFCTLVECLYFISMYGSVFTICFISLDRFLAIQYPILASHLRSPRKTFGICCIIWMLVWIGSIPIYTFHREVERYKCFHNMSDVTWSASVFFPLEIFGFLLPMGIMGFCSYRSIHILLRRPDSTEDWVQQRDTKGWVQKRACIWTIATNLVIFVVSFLPVHLGFFLQYLVRNRFILDCRMKQGISLFLQLSLCFSNINCCLDVFCYYFVIKEFRMRIKAHRPSTIKLVNQDTMVSRG</sequence>